<proteinExistence type="inferred from homology"/>
<organism>
    <name type="scientific">Methanospirillum hungatei JF-1 (strain ATCC 27890 / DSM 864 / NBRC 100397 / JF-1)</name>
    <dbReference type="NCBI Taxonomy" id="323259"/>
    <lineage>
        <taxon>Archaea</taxon>
        <taxon>Methanobacteriati</taxon>
        <taxon>Methanobacteriota</taxon>
        <taxon>Stenosarchaea group</taxon>
        <taxon>Methanomicrobia</taxon>
        <taxon>Methanomicrobiales</taxon>
        <taxon>Methanospirillaceae</taxon>
        <taxon>Methanospirillum</taxon>
    </lineage>
</organism>
<name>RL5_METHJ</name>
<accession>Q2FT38</accession>
<dbReference type="EMBL" id="CP000254">
    <property type="protein sequence ID" value="ABD41945.1"/>
    <property type="molecule type" value="Genomic_DNA"/>
</dbReference>
<dbReference type="RefSeq" id="WP_011449203.1">
    <property type="nucleotide sequence ID" value="NC_007796.1"/>
</dbReference>
<dbReference type="SMR" id="Q2FT38"/>
<dbReference type="FunCoup" id="Q2FT38">
    <property type="interactions" value="142"/>
</dbReference>
<dbReference type="STRING" id="323259.Mhun_2240"/>
<dbReference type="EnsemblBacteria" id="ABD41945">
    <property type="protein sequence ID" value="ABD41945"/>
    <property type="gene ID" value="Mhun_2240"/>
</dbReference>
<dbReference type="GeneID" id="3923942"/>
<dbReference type="KEGG" id="mhu:Mhun_2240"/>
<dbReference type="eggNOG" id="arCOG04092">
    <property type="taxonomic scope" value="Archaea"/>
</dbReference>
<dbReference type="HOGENOM" id="CLU_061015_3_0_2"/>
<dbReference type="InParanoid" id="Q2FT38"/>
<dbReference type="OrthoDB" id="372044at2157"/>
<dbReference type="Proteomes" id="UP000001941">
    <property type="component" value="Chromosome"/>
</dbReference>
<dbReference type="GO" id="GO:1990904">
    <property type="term" value="C:ribonucleoprotein complex"/>
    <property type="evidence" value="ECO:0007669"/>
    <property type="project" value="UniProtKB-KW"/>
</dbReference>
<dbReference type="GO" id="GO:0005840">
    <property type="term" value="C:ribosome"/>
    <property type="evidence" value="ECO:0007669"/>
    <property type="project" value="UniProtKB-KW"/>
</dbReference>
<dbReference type="GO" id="GO:0019843">
    <property type="term" value="F:rRNA binding"/>
    <property type="evidence" value="ECO:0007669"/>
    <property type="project" value="UniProtKB-UniRule"/>
</dbReference>
<dbReference type="GO" id="GO:0003735">
    <property type="term" value="F:structural constituent of ribosome"/>
    <property type="evidence" value="ECO:0007669"/>
    <property type="project" value="InterPro"/>
</dbReference>
<dbReference type="GO" id="GO:0000049">
    <property type="term" value="F:tRNA binding"/>
    <property type="evidence" value="ECO:0007669"/>
    <property type="project" value="UniProtKB-UniRule"/>
</dbReference>
<dbReference type="GO" id="GO:0006412">
    <property type="term" value="P:translation"/>
    <property type="evidence" value="ECO:0007669"/>
    <property type="project" value="UniProtKB-UniRule"/>
</dbReference>
<dbReference type="FunFam" id="3.30.1440.10:FF:000002">
    <property type="entry name" value="60S ribosomal protein L11"/>
    <property type="match status" value="1"/>
</dbReference>
<dbReference type="Gene3D" id="3.30.1440.10">
    <property type="match status" value="1"/>
</dbReference>
<dbReference type="HAMAP" id="MF_01333_A">
    <property type="entry name" value="Ribosomal_uL5_A"/>
    <property type="match status" value="1"/>
</dbReference>
<dbReference type="InterPro" id="IPR002132">
    <property type="entry name" value="Ribosomal_uL5"/>
</dbReference>
<dbReference type="InterPro" id="IPR022804">
    <property type="entry name" value="Ribosomal_uL5_arc"/>
</dbReference>
<dbReference type="InterPro" id="IPR031309">
    <property type="entry name" value="Ribosomal_uL5_C"/>
</dbReference>
<dbReference type="InterPro" id="IPR022803">
    <property type="entry name" value="Ribosomal_uL5_dom_sf"/>
</dbReference>
<dbReference type="InterPro" id="IPR031310">
    <property type="entry name" value="Ribosomal_uL5_N"/>
</dbReference>
<dbReference type="NCBIfam" id="NF003258">
    <property type="entry name" value="PRK04219.1"/>
    <property type="match status" value="1"/>
</dbReference>
<dbReference type="PANTHER" id="PTHR11994">
    <property type="entry name" value="60S RIBOSOMAL PROTEIN L11-RELATED"/>
    <property type="match status" value="1"/>
</dbReference>
<dbReference type="Pfam" id="PF00281">
    <property type="entry name" value="Ribosomal_L5"/>
    <property type="match status" value="1"/>
</dbReference>
<dbReference type="Pfam" id="PF00673">
    <property type="entry name" value="Ribosomal_L5_C"/>
    <property type="match status" value="1"/>
</dbReference>
<dbReference type="PIRSF" id="PIRSF002161">
    <property type="entry name" value="Ribosomal_L5"/>
    <property type="match status" value="1"/>
</dbReference>
<dbReference type="SUPFAM" id="SSF55282">
    <property type="entry name" value="RL5-like"/>
    <property type="match status" value="1"/>
</dbReference>
<reference key="1">
    <citation type="journal article" date="2016" name="Stand. Genomic Sci.">
        <title>Complete genome sequence of Methanospirillum hungatei type strain JF1.</title>
        <authorList>
            <person name="Gunsalus R.P."/>
            <person name="Cook L.E."/>
            <person name="Crable B."/>
            <person name="Rohlin L."/>
            <person name="McDonald E."/>
            <person name="Mouttaki H."/>
            <person name="Sieber J.R."/>
            <person name="Poweleit N."/>
            <person name="Zhou H."/>
            <person name="Lapidus A.L."/>
            <person name="Daligault H.E."/>
            <person name="Land M."/>
            <person name="Gilna P."/>
            <person name="Ivanova N."/>
            <person name="Kyrpides N."/>
            <person name="Culley D.E."/>
            <person name="McInerney M.J."/>
        </authorList>
    </citation>
    <scope>NUCLEOTIDE SEQUENCE [LARGE SCALE GENOMIC DNA]</scope>
    <source>
        <strain>ATCC 27890 / DSM 864 / NBRC 100397 / JF-1</strain>
    </source>
</reference>
<keyword id="KW-1185">Reference proteome</keyword>
<keyword id="KW-0687">Ribonucleoprotein</keyword>
<keyword id="KW-0689">Ribosomal protein</keyword>
<keyword id="KW-0694">RNA-binding</keyword>
<keyword id="KW-0699">rRNA-binding</keyword>
<keyword id="KW-0820">tRNA-binding</keyword>
<evidence type="ECO:0000255" key="1">
    <source>
        <dbReference type="HAMAP-Rule" id="MF_01333"/>
    </source>
</evidence>
<evidence type="ECO:0000305" key="2"/>
<gene>
    <name evidence="1" type="primary">rpl5</name>
    <name type="ordered locus">Mhun_2240</name>
</gene>
<feature type="chain" id="PRO_0000365645" description="Large ribosomal subunit protein uL5">
    <location>
        <begin position="1"/>
        <end position="168"/>
    </location>
</feature>
<comment type="function">
    <text evidence="1">This is one of the proteins that bind and probably mediate the attachment of the 5S RNA into the large ribosomal subunit, where it forms part of the central protuberance. In the 70S ribosome it contacts protein S13 of the 30S subunit (bridge B1b), connecting the 2 subunits; this bridge is implicated in subunit movement. May contact the P site tRNA; the 5S rRNA and some of its associated proteins might help stabilize positioning of ribosome-bound tRNAs.</text>
</comment>
<comment type="subunit">
    <text evidence="1">Part of the 50S ribosomal subunit; contacts the 5S rRNA and probably tRNA. Forms a bridge to the 30S subunit in the 70S ribosome.</text>
</comment>
<comment type="similarity">
    <text evidence="1">Belongs to the universal ribosomal protein uL5 family.</text>
</comment>
<protein>
    <recommendedName>
        <fullName evidence="1">Large ribosomal subunit protein uL5</fullName>
    </recommendedName>
    <alternativeName>
        <fullName evidence="2">50S ribosomal protein L5</fullName>
    </alternativeName>
</protein>
<sequence>MNPNRSVAVDKVVVHMGVGEAGDKLVNAERIISEITGNTPVRSVAKQTLPAFGIRKGAPISCRVTLRGEAAEKFLETSIKIVENKINSRAFDKQGNFSFGIEEHTDYPGQSYDPKVGIFGLDVTVVLKRNGVRIARRHIQQKKLPLKQLVTVEDAKLFLKDRYNVEVQ</sequence>